<reference key="1">
    <citation type="journal article" date="1994" name="Plant Cell">
        <title>Sequence analysis and expression patterns divide the Maize knotted1-like homeobox genes into two classes.</title>
        <authorList>
            <person name="Kerstetter R."/>
            <person name="Vollbrecht E."/>
            <person name="Lowe B."/>
            <person name="Veit B."/>
            <person name="Yamaguchi J."/>
            <person name="Hake S."/>
        </authorList>
    </citation>
    <scope>NUCLEOTIDE SEQUENCE</scope>
    <source>
        <tissue>Ear of corn</tissue>
        <tissue>Seedling</tissue>
    </source>
</reference>
<protein>
    <recommendedName>
        <fullName>Homeobox protein knotted-1-like 5</fullName>
    </recommendedName>
</protein>
<proteinExistence type="evidence at transcript level"/>
<name>KNOX5_MAIZE</name>
<keyword id="KW-0238">DNA-binding</keyword>
<keyword id="KW-0371">Homeobox</keyword>
<keyword id="KW-0539">Nucleus</keyword>
<keyword id="KW-1185">Reference proteome</keyword>
<accession>P56663</accession>
<gene>
    <name type="primary">KNOX5</name>
</gene>
<dbReference type="SMR" id="P56663"/>
<dbReference type="STRING" id="4577.P56663"/>
<dbReference type="InParanoid" id="P56663"/>
<dbReference type="Proteomes" id="UP000007305">
    <property type="component" value="Unplaced"/>
</dbReference>
<dbReference type="ExpressionAtlas" id="P56663">
    <property type="expression patterns" value="baseline and differential"/>
</dbReference>
<dbReference type="GO" id="GO:0005634">
    <property type="term" value="C:nucleus"/>
    <property type="evidence" value="ECO:0007669"/>
    <property type="project" value="UniProtKB-SubCell"/>
</dbReference>
<dbReference type="GO" id="GO:0003677">
    <property type="term" value="F:DNA binding"/>
    <property type="evidence" value="ECO:0007669"/>
    <property type="project" value="UniProtKB-KW"/>
</dbReference>
<dbReference type="GO" id="GO:0000981">
    <property type="term" value="F:DNA-binding transcription factor activity, RNA polymerase II-specific"/>
    <property type="evidence" value="ECO:0007669"/>
    <property type="project" value="InterPro"/>
</dbReference>
<dbReference type="CDD" id="cd00086">
    <property type="entry name" value="homeodomain"/>
    <property type="match status" value="1"/>
</dbReference>
<dbReference type="Gene3D" id="1.10.10.60">
    <property type="entry name" value="Homeodomain-like"/>
    <property type="match status" value="1"/>
</dbReference>
<dbReference type="InterPro" id="IPR005539">
    <property type="entry name" value="ELK_dom"/>
</dbReference>
<dbReference type="InterPro" id="IPR001356">
    <property type="entry name" value="HD"/>
</dbReference>
<dbReference type="InterPro" id="IPR017970">
    <property type="entry name" value="Homeobox_CS"/>
</dbReference>
<dbReference type="InterPro" id="IPR009057">
    <property type="entry name" value="Homeodomain-like_sf"/>
</dbReference>
<dbReference type="InterPro" id="IPR008422">
    <property type="entry name" value="KN_HD"/>
</dbReference>
<dbReference type="InterPro" id="IPR050224">
    <property type="entry name" value="TALE_homeobox"/>
</dbReference>
<dbReference type="PANTHER" id="PTHR11850">
    <property type="entry name" value="HOMEOBOX PROTEIN TRANSCRIPTION FACTORS"/>
    <property type="match status" value="1"/>
</dbReference>
<dbReference type="Pfam" id="PF03789">
    <property type="entry name" value="ELK"/>
    <property type="match status" value="1"/>
</dbReference>
<dbReference type="Pfam" id="PF05920">
    <property type="entry name" value="Homeobox_KN"/>
    <property type="match status" value="1"/>
</dbReference>
<dbReference type="SMART" id="SM01188">
    <property type="entry name" value="ELK"/>
    <property type="match status" value="1"/>
</dbReference>
<dbReference type="SMART" id="SM00389">
    <property type="entry name" value="HOX"/>
    <property type="match status" value="1"/>
</dbReference>
<dbReference type="SUPFAM" id="SSF46689">
    <property type="entry name" value="Homeodomain-like"/>
    <property type="match status" value="1"/>
</dbReference>
<dbReference type="PROSITE" id="PS51213">
    <property type="entry name" value="ELK"/>
    <property type="match status" value="1"/>
</dbReference>
<dbReference type="PROSITE" id="PS00027">
    <property type="entry name" value="HOMEOBOX_1"/>
    <property type="match status" value="1"/>
</dbReference>
<dbReference type="PROSITE" id="PS50071">
    <property type="entry name" value="HOMEOBOX_2"/>
    <property type="match status" value="1"/>
</dbReference>
<feature type="chain" id="PRO_0000048966" description="Homeobox protein knotted-1-like 5">
    <location>
        <begin position="1" status="less than"/>
        <end position="85" status="greater than"/>
    </location>
</feature>
<feature type="domain" description="ELK" evidence="2">
    <location>
        <begin position="1"/>
        <end position="21"/>
    </location>
</feature>
<feature type="DNA-binding region" description="Homeobox; TALE-type" evidence="1">
    <location>
        <begin position="22"/>
        <end position="85"/>
    </location>
</feature>
<feature type="non-terminal residue">
    <location>
        <position position="1"/>
    </location>
</feature>
<feature type="non-terminal residue">
    <location>
        <position position="85"/>
    </location>
</feature>
<sequence>ELKEMLLKKYSGCLSRLRSEFLKKRKKGKLPKDARSALMDWWNTHYRWPYPTEEDKVRLAAMTGLDPKQINNWFINQRKRHWKPS</sequence>
<organism>
    <name type="scientific">Zea mays</name>
    <name type="common">Maize</name>
    <dbReference type="NCBI Taxonomy" id="4577"/>
    <lineage>
        <taxon>Eukaryota</taxon>
        <taxon>Viridiplantae</taxon>
        <taxon>Streptophyta</taxon>
        <taxon>Embryophyta</taxon>
        <taxon>Tracheophyta</taxon>
        <taxon>Spermatophyta</taxon>
        <taxon>Magnoliopsida</taxon>
        <taxon>Liliopsida</taxon>
        <taxon>Poales</taxon>
        <taxon>Poaceae</taxon>
        <taxon>PACMAD clade</taxon>
        <taxon>Panicoideae</taxon>
        <taxon>Andropogonodae</taxon>
        <taxon>Andropogoneae</taxon>
        <taxon>Tripsacinae</taxon>
        <taxon>Zea</taxon>
    </lineage>
</organism>
<evidence type="ECO:0000255" key="1">
    <source>
        <dbReference type="PROSITE-ProRule" id="PRU00108"/>
    </source>
</evidence>
<evidence type="ECO:0000255" key="2">
    <source>
        <dbReference type="PROSITE-ProRule" id="PRU00559"/>
    </source>
</evidence>
<evidence type="ECO:0000305" key="3"/>
<comment type="function">
    <text>Probably binds to the DNA sequence 5'-TGAC-3'.</text>
</comment>
<comment type="subcellular location">
    <subcellularLocation>
        <location evidence="3">Nucleus</location>
    </subcellularLocation>
</comment>
<comment type="tissue specificity">
    <text>Strongly expressed in ear inflorescence primordia and shoot meristem. Weakly expressed in embryos. Absent from leaves.</text>
</comment>
<comment type="similarity">
    <text evidence="2">Belongs to the TALE/KNOX homeobox family.</text>
</comment>